<sequence>MAITSVIEQMRQLIQLIAKHNHAYYVMDQPTISDSEYDHLFHQLKALEEQYPELVQADSPTTKVGGQALSKFESVTHVVPMLSLGNVFNQEDLFAFARRVEERLPNQKVQYEVELKLDGLAISLWYENGVLVRGVTRGDGETGEDITQNVKTIRNLPKVLHSEKYEIPRLLEVRGEVLMPKSGFEKLNADQEAKGEKTFANPRNAAAGSLRQLDPNIAAARPLAFYAYGIAQCEPNHGLTTMHDSLQWLTELGFQIAERQYLCNSIQEVQQRYEQIQQERPNLQVEIDGMVVKVDDLKQQQQLGFLSREPRWATAYKFPAQAALTTVEQIDWQVGRTGTLTPVARLNPVFVGGVTVSNVTLHNIGEIHRLDVRIGDTVSVYRTGDVIPKVEKVWPEFRPAEAEVVHLPESCPVCASPVVMPEGEALARCSGGLYCAAQRIEAIRHFVSRKAMDIEGLGDRWVESLLRLDLLKDVADIYHLHEHRETLLGIEKMGEKSVQNLIDAIEASKKTTLARFIYALGIRGVGETTARMLANTFQTLEALKAANVEALKKTPDVGDITAEWIADFFLAPHNIEVLDRLIAAGIHWDAPTAPTRQPLNGESWVLTGTLEQMTRDQATQMLQALGARVSGSVSSKTKCVVAGEKAGSKLEKAAKLGIPVMNETDFLSLMAGYGQTLS</sequence>
<protein>
    <recommendedName>
        <fullName evidence="1">DNA ligase</fullName>
        <ecNumber evidence="1">6.5.1.2</ecNumber>
    </recommendedName>
    <alternativeName>
        <fullName evidence="1">Polydeoxyribonucleotide synthase [NAD(+)]</fullName>
    </alternativeName>
</protein>
<feature type="chain" id="PRO_0000380274" description="DNA ligase">
    <location>
        <begin position="1"/>
        <end position="678"/>
    </location>
</feature>
<feature type="domain" description="BRCT" evidence="1">
    <location>
        <begin position="594"/>
        <end position="678"/>
    </location>
</feature>
<feature type="active site" description="N6-AMP-lysine intermediate" evidence="1">
    <location>
        <position position="116"/>
    </location>
</feature>
<feature type="binding site" evidence="1">
    <location>
        <begin position="34"/>
        <end position="38"/>
    </location>
    <ligand>
        <name>NAD(+)</name>
        <dbReference type="ChEBI" id="CHEBI:57540"/>
    </ligand>
</feature>
<feature type="binding site" evidence="1">
    <location>
        <begin position="83"/>
        <end position="84"/>
    </location>
    <ligand>
        <name>NAD(+)</name>
        <dbReference type="ChEBI" id="CHEBI:57540"/>
    </ligand>
</feature>
<feature type="binding site" evidence="1">
    <location>
        <position position="114"/>
    </location>
    <ligand>
        <name>NAD(+)</name>
        <dbReference type="ChEBI" id="CHEBI:57540"/>
    </ligand>
</feature>
<feature type="binding site" evidence="1">
    <location>
        <position position="137"/>
    </location>
    <ligand>
        <name>NAD(+)</name>
        <dbReference type="ChEBI" id="CHEBI:57540"/>
    </ligand>
</feature>
<feature type="binding site" evidence="1">
    <location>
        <position position="176"/>
    </location>
    <ligand>
        <name>NAD(+)</name>
        <dbReference type="ChEBI" id="CHEBI:57540"/>
    </ligand>
</feature>
<feature type="binding site" evidence="1">
    <location>
        <position position="293"/>
    </location>
    <ligand>
        <name>NAD(+)</name>
        <dbReference type="ChEBI" id="CHEBI:57540"/>
    </ligand>
</feature>
<feature type="binding site" evidence="1">
    <location>
        <position position="317"/>
    </location>
    <ligand>
        <name>NAD(+)</name>
        <dbReference type="ChEBI" id="CHEBI:57540"/>
    </ligand>
</feature>
<feature type="binding site" evidence="1">
    <location>
        <position position="411"/>
    </location>
    <ligand>
        <name>Zn(2+)</name>
        <dbReference type="ChEBI" id="CHEBI:29105"/>
    </ligand>
</feature>
<feature type="binding site" evidence="1">
    <location>
        <position position="414"/>
    </location>
    <ligand>
        <name>Zn(2+)</name>
        <dbReference type="ChEBI" id="CHEBI:29105"/>
    </ligand>
</feature>
<feature type="binding site" evidence="1">
    <location>
        <position position="429"/>
    </location>
    <ligand>
        <name>Zn(2+)</name>
        <dbReference type="ChEBI" id="CHEBI:29105"/>
    </ligand>
</feature>
<feature type="binding site" evidence="1">
    <location>
        <position position="435"/>
    </location>
    <ligand>
        <name>Zn(2+)</name>
        <dbReference type="ChEBI" id="CHEBI:29105"/>
    </ligand>
</feature>
<comment type="function">
    <text evidence="1">DNA ligase that catalyzes the formation of phosphodiester linkages between 5'-phosphoryl and 3'-hydroxyl groups in double-stranded DNA using NAD as a coenzyme and as the energy source for the reaction. It is essential for DNA replication and repair of damaged DNA.</text>
</comment>
<comment type="catalytic activity">
    <reaction evidence="1">
        <text>NAD(+) + (deoxyribonucleotide)n-3'-hydroxyl + 5'-phospho-(deoxyribonucleotide)m = (deoxyribonucleotide)n+m + AMP + beta-nicotinamide D-nucleotide.</text>
        <dbReference type="EC" id="6.5.1.2"/>
    </reaction>
</comment>
<comment type="cofactor">
    <cofactor evidence="1">
        <name>Mg(2+)</name>
        <dbReference type="ChEBI" id="CHEBI:18420"/>
    </cofactor>
    <cofactor evidence="1">
        <name>Mn(2+)</name>
        <dbReference type="ChEBI" id="CHEBI:29035"/>
    </cofactor>
</comment>
<comment type="similarity">
    <text evidence="1">Belongs to the NAD-dependent DNA ligase family. LigA subfamily.</text>
</comment>
<accession>B7GZ71</accession>
<evidence type="ECO:0000255" key="1">
    <source>
        <dbReference type="HAMAP-Rule" id="MF_01588"/>
    </source>
</evidence>
<gene>
    <name evidence="1" type="primary">ligA</name>
    <name type="ordered locus">ABBFA_002812</name>
</gene>
<name>DNLJ_ACIB3</name>
<dbReference type="EC" id="6.5.1.2" evidence="1"/>
<dbReference type="EMBL" id="CP001172">
    <property type="protein sequence ID" value="ACJ56909.1"/>
    <property type="molecule type" value="Genomic_DNA"/>
</dbReference>
<dbReference type="RefSeq" id="WP_001018842.1">
    <property type="nucleotide sequence ID" value="NZ_CP001172.1"/>
</dbReference>
<dbReference type="SMR" id="B7GZ71"/>
<dbReference type="HOGENOM" id="CLU_007764_2_1_6"/>
<dbReference type="Proteomes" id="UP000006924">
    <property type="component" value="Chromosome"/>
</dbReference>
<dbReference type="GO" id="GO:0005829">
    <property type="term" value="C:cytosol"/>
    <property type="evidence" value="ECO:0007669"/>
    <property type="project" value="TreeGrafter"/>
</dbReference>
<dbReference type="GO" id="GO:0003677">
    <property type="term" value="F:DNA binding"/>
    <property type="evidence" value="ECO:0007669"/>
    <property type="project" value="InterPro"/>
</dbReference>
<dbReference type="GO" id="GO:0003911">
    <property type="term" value="F:DNA ligase (NAD+) activity"/>
    <property type="evidence" value="ECO:0007669"/>
    <property type="project" value="UniProtKB-UniRule"/>
</dbReference>
<dbReference type="GO" id="GO:0046872">
    <property type="term" value="F:metal ion binding"/>
    <property type="evidence" value="ECO:0007669"/>
    <property type="project" value="UniProtKB-KW"/>
</dbReference>
<dbReference type="GO" id="GO:0006281">
    <property type="term" value="P:DNA repair"/>
    <property type="evidence" value="ECO:0007669"/>
    <property type="project" value="UniProtKB-KW"/>
</dbReference>
<dbReference type="GO" id="GO:0006260">
    <property type="term" value="P:DNA replication"/>
    <property type="evidence" value="ECO:0007669"/>
    <property type="project" value="UniProtKB-KW"/>
</dbReference>
<dbReference type="CDD" id="cd17748">
    <property type="entry name" value="BRCT_DNA_ligase_like"/>
    <property type="match status" value="1"/>
</dbReference>
<dbReference type="CDD" id="cd00114">
    <property type="entry name" value="LIGANc"/>
    <property type="match status" value="1"/>
</dbReference>
<dbReference type="FunFam" id="1.10.150.20:FF:000006">
    <property type="entry name" value="DNA ligase"/>
    <property type="match status" value="1"/>
</dbReference>
<dbReference type="FunFam" id="1.10.150.20:FF:000007">
    <property type="entry name" value="DNA ligase"/>
    <property type="match status" value="1"/>
</dbReference>
<dbReference type="FunFam" id="1.10.287.610:FF:000002">
    <property type="entry name" value="DNA ligase"/>
    <property type="match status" value="1"/>
</dbReference>
<dbReference type="FunFam" id="2.40.50.140:FF:000012">
    <property type="entry name" value="DNA ligase"/>
    <property type="match status" value="1"/>
</dbReference>
<dbReference type="FunFam" id="3.30.470.30:FF:000001">
    <property type="entry name" value="DNA ligase"/>
    <property type="match status" value="1"/>
</dbReference>
<dbReference type="Gene3D" id="6.20.10.30">
    <property type="match status" value="1"/>
</dbReference>
<dbReference type="Gene3D" id="1.10.150.20">
    <property type="entry name" value="5' to 3' exonuclease, C-terminal subdomain"/>
    <property type="match status" value="2"/>
</dbReference>
<dbReference type="Gene3D" id="3.40.50.10190">
    <property type="entry name" value="BRCT domain"/>
    <property type="match status" value="1"/>
</dbReference>
<dbReference type="Gene3D" id="3.30.470.30">
    <property type="entry name" value="DNA ligase/mRNA capping enzyme"/>
    <property type="match status" value="1"/>
</dbReference>
<dbReference type="Gene3D" id="1.10.287.610">
    <property type="entry name" value="Helix hairpin bin"/>
    <property type="match status" value="1"/>
</dbReference>
<dbReference type="Gene3D" id="2.40.50.140">
    <property type="entry name" value="Nucleic acid-binding proteins"/>
    <property type="match status" value="1"/>
</dbReference>
<dbReference type="HAMAP" id="MF_01588">
    <property type="entry name" value="DNA_ligase_A"/>
    <property type="match status" value="1"/>
</dbReference>
<dbReference type="InterPro" id="IPR001357">
    <property type="entry name" value="BRCT_dom"/>
</dbReference>
<dbReference type="InterPro" id="IPR036420">
    <property type="entry name" value="BRCT_dom_sf"/>
</dbReference>
<dbReference type="InterPro" id="IPR041663">
    <property type="entry name" value="DisA/LigA_HHH"/>
</dbReference>
<dbReference type="InterPro" id="IPR001679">
    <property type="entry name" value="DNA_ligase"/>
</dbReference>
<dbReference type="InterPro" id="IPR018239">
    <property type="entry name" value="DNA_ligase_AS"/>
</dbReference>
<dbReference type="InterPro" id="IPR033136">
    <property type="entry name" value="DNA_ligase_CS"/>
</dbReference>
<dbReference type="InterPro" id="IPR013839">
    <property type="entry name" value="DNAligase_adenylation"/>
</dbReference>
<dbReference type="InterPro" id="IPR013840">
    <property type="entry name" value="DNAligase_N"/>
</dbReference>
<dbReference type="InterPro" id="IPR003583">
    <property type="entry name" value="Hlx-hairpin-Hlx_DNA-bd_motif"/>
</dbReference>
<dbReference type="InterPro" id="IPR012340">
    <property type="entry name" value="NA-bd_OB-fold"/>
</dbReference>
<dbReference type="InterPro" id="IPR004150">
    <property type="entry name" value="NAD_DNA_ligase_OB"/>
</dbReference>
<dbReference type="InterPro" id="IPR010994">
    <property type="entry name" value="RuvA_2-like"/>
</dbReference>
<dbReference type="InterPro" id="IPR004149">
    <property type="entry name" value="Znf_DNAligase_C4"/>
</dbReference>
<dbReference type="NCBIfam" id="TIGR00575">
    <property type="entry name" value="dnlj"/>
    <property type="match status" value="1"/>
</dbReference>
<dbReference type="NCBIfam" id="NF005932">
    <property type="entry name" value="PRK07956.1"/>
    <property type="match status" value="1"/>
</dbReference>
<dbReference type="PANTHER" id="PTHR23389">
    <property type="entry name" value="CHROMOSOME TRANSMISSION FIDELITY FACTOR 18"/>
    <property type="match status" value="1"/>
</dbReference>
<dbReference type="PANTHER" id="PTHR23389:SF9">
    <property type="entry name" value="DNA LIGASE"/>
    <property type="match status" value="1"/>
</dbReference>
<dbReference type="Pfam" id="PF00533">
    <property type="entry name" value="BRCT"/>
    <property type="match status" value="1"/>
</dbReference>
<dbReference type="Pfam" id="PF01653">
    <property type="entry name" value="DNA_ligase_aden"/>
    <property type="match status" value="1"/>
</dbReference>
<dbReference type="Pfam" id="PF03120">
    <property type="entry name" value="DNA_ligase_OB"/>
    <property type="match status" value="1"/>
</dbReference>
<dbReference type="Pfam" id="PF03119">
    <property type="entry name" value="DNA_ligase_ZBD"/>
    <property type="match status" value="1"/>
</dbReference>
<dbReference type="Pfam" id="PF12826">
    <property type="entry name" value="HHH_2"/>
    <property type="match status" value="1"/>
</dbReference>
<dbReference type="Pfam" id="PF22745">
    <property type="entry name" value="Nlig-Ia"/>
    <property type="match status" value="1"/>
</dbReference>
<dbReference type="PIRSF" id="PIRSF001604">
    <property type="entry name" value="LigA"/>
    <property type="match status" value="1"/>
</dbReference>
<dbReference type="SMART" id="SM00292">
    <property type="entry name" value="BRCT"/>
    <property type="match status" value="1"/>
</dbReference>
<dbReference type="SMART" id="SM00278">
    <property type="entry name" value="HhH1"/>
    <property type="match status" value="4"/>
</dbReference>
<dbReference type="SMART" id="SM00532">
    <property type="entry name" value="LIGANc"/>
    <property type="match status" value="1"/>
</dbReference>
<dbReference type="SUPFAM" id="SSF52113">
    <property type="entry name" value="BRCT domain"/>
    <property type="match status" value="1"/>
</dbReference>
<dbReference type="SUPFAM" id="SSF56091">
    <property type="entry name" value="DNA ligase/mRNA capping enzyme, catalytic domain"/>
    <property type="match status" value="1"/>
</dbReference>
<dbReference type="SUPFAM" id="SSF50249">
    <property type="entry name" value="Nucleic acid-binding proteins"/>
    <property type="match status" value="1"/>
</dbReference>
<dbReference type="SUPFAM" id="SSF47781">
    <property type="entry name" value="RuvA domain 2-like"/>
    <property type="match status" value="1"/>
</dbReference>
<dbReference type="PROSITE" id="PS50172">
    <property type="entry name" value="BRCT"/>
    <property type="match status" value="1"/>
</dbReference>
<dbReference type="PROSITE" id="PS01055">
    <property type="entry name" value="DNA_LIGASE_N1"/>
    <property type="match status" value="1"/>
</dbReference>
<dbReference type="PROSITE" id="PS01056">
    <property type="entry name" value="DNA_LIGASE_N2"/>
    <property type="match status" value="1"/>
</dbReference>
<proteinExistence type="inferred from homology"/>
<keyword id="KW-0227">DNA damage</keyword>
<keyword id="KW-0234">DNA repair</keyword>
<keyword id="KW-0235">DNA replication</keyword>
<keyword id="KW-0436">Ligase</keyword>
<keyword id="KW-0460">Magnesium</keyword>
<keyword id="KW-0464">Manganese</keyword>
<keyword id="KW-0479">Metal-binding</keyword>
<keyword id="KW-0520">NAD</keyword>
<keyword id="KW-0862">Zinc</keyword>
<reference key="1">
    <citation type="journal article" date="2008" name="J. Bacteriol.">
        <title>Comparative genome sequence analysis of multidrug-resistant Acinetobacter baumannii.</title>
        <authorList>
            <person name="Adams M.D."/>
            <person name="Goglin K."/>
            <person name="Molyneaux N."/>
            <person name="Hujer K.M."/>
            <person name="Lavender H."/>
            <person name="Jamison J.J."/>
            <person name="MacDonald I.J."/>
            <person name="Martin K.M."/>
            <person name="Russo T."/>
            <person name="Campagnari A.A."/>
            <person name="Hujer A.M."/>
            <person name="Bonomo R.A."/>
            <person name="Gill S.R."/>
        </authorList>
    </citation>
    <scope>NUCLEOTIDE SEQUENCE [LARGE SCALE GENOMIC DNA]</scope>
    <source>
        <strain>AB307-0294</strain>
    </source>
</reference>
<organism>
    <name type="scientific">Acinetobacter baumannii (strain AB307-0294)</name>
    <dbReference type="NCBI Taxonomy" id="557600"/>
    <lineage>
        <taxon>Bacteria</taxon>
        <taxon>Pseudomonadati</taxon>
        <taxon>Pseudomonadota</taxon>
        <taxon>Gammaproteobacteria</taxon>
        <taxon>Moraxellales</taxon>
        <taxon>Moraxellaceae</taxon>
        <taxon>Acinetobacter</taxon>
        <taxon>Acinetobacter calcoaceticus/baumannii complex</taxon>
    </lineage>
</organism>